<organism>
    <name type="scientific">Pyrococcus abyssi (strain GE5 / Orsay)</name>
    <dbReference type="NCBI Taxonomy" id="272844"/>
    <lineage>
        <taxon>Archaea</taxon>
        <taxon>Methanobacteriati</taxon>
        <taxon>Methanobacteriota</taxon>
        <taxon>Thermococci</taxon>
        <taxon>Thermococcales</taxon>
        <taxon>Thermococcaceae</taxon>
        <taxon>Pyrococcus</taxon>
    </lineage>
</organism>
<dbReference type="EMBL" id="AJ248284">
    <property type="protein sequence ID" value="CAB49246.1"/>
    <property type="molecule type" value="Genomic_DNA"/>
</dbReference>
<dbReference type="EMBL" id="HE613800">
    <property type="protein sequence ID" value="CCE69701.1"/>
    <property type="molecule type" value="Genomic_DNA"/>
</dbReference>
<dbReference type="PIR" id="G75145">
    <property type="entry name" value="G75145"/>
</dbReference>
<dbReference type="RefSeq" id="WP_010867446.1">
    <property type="nucleotide sequence ID" value="NC_000868.1"/>
</dbReference>
<dbReference type="SMR" id="Q9V1V2"/>
<dbReference type="STRING" id="272844.PAB2133"/>
<dbReference type="KEGG" id="pab:PAB2133"/>
<dbReference type="PATRIC" id="fig|272844.11.peg.345"/>
<dbReference type="eggNOG" id="arCOG00781">
    <property type="taxonomic scope" value="Archaea"/>
</dbReference>
<dbReference type="HOGENOM" id="CLU_071479_3_1_2"/>
<dbReference type="OrthoDB" id="372100at2157"/>
<dbReference type="PhylomeDB" id="Q9V1V2"/>
<dbReference type="Proteomes" id="UP000000810">
    <property type="component" value="Chromosome"/>
</dbReference>
<dbReference type="Proteomes" id="UP000009139">
    <property type="component" value="Chromosome"/>
</dbReference>
<dbReference type="GO" id="GO:0022625">
    <property type="term" value="C:cytosolic large ribosomal subunit"/>
    <property type="evidence" value="ECO:0007669"/>
    <property type="project" value="TreeGrafter"/>
</dbReference>
<dbReference type="GO" id="GO:0003735">
    <property type="term" value="F:structural constituent of ribosome"/>
    <property type="evidence" value="ECO:0007669"/>
    <property type="project" value="InterPro"/>
</dbReference>
<dbReference type="GO" id="GO:0006412">
    <property type="term" value="P:translation"/>
    <property type="evidence" value="ECO:0007669"/>
    <property type="project" value="UniProtKB-UniRule"/>
</dbReference>
<dbReference type="CDD" id="cd00513">
    <property type="entry name" value="Ribosomal_L32_L32e"/>
    <property type="match status" value="1"/>
</dbReference>
<dbReference type="HAMAP" id="MF_00810">
    <property type="entry name" value="Ribosomal_eL32"/>
    <property type="match status" value="1"/>
</dbReference>
<dbReference type="InterPro" id="IPR001515">
    <property type="entry name" value="Ribosomal_eL32"/>
</dbReference>
<dbReference type="InterPro" id="IPR023654">
    <property type="entry name" value="Ribosomal_eL32_arc"/>
</dbReference>
<dbReference type="InterPro" id="IPR018263">
    <property type="entry name" value="Ribosomal_eL32_CS"/>
</dbReference>
<dbReference type="InterPro" id="IPR036351">
    <property type="entry name" value="Ribosomal_eL32_sf"/>
</dbReference>
<dbReference type="NCBIfam" id="NF006332">
    <property type="entry name" value="PRK08562.1"/>
    <property type="match status" value="1"/>
</dbReference>
<dbReference type="PANTHER" id="PTHR23413">
    <property type="entry name" value="60S RIBOSOMAL PROTEIN L32 AND DNA-DIRECTED RNA POLYMERASE II, SUBUNIT N"/>
    <property type="match status" value="1"/>
</dbReference>
<dbReference type="PANTHER" id="PTHR23413:SF1">
    <property type="entry name" value="RIBOSOMAL PROTEIN L32"/>
    <property type="match status" value="1"/>
</dbReference>
<dbReference type="Pfam" id="PF01655">
    <property type="entry name" value="Ribosomal_L32e"/>
    <property type="match status" value="1"/>
</dbReference>
<dbReference type="SMART" id="SM01393">
    <property type="entry name" value="Ribosomal_L32e"/>
    <property type="match status" value="1"/>
</dbReference>
<dbReference type="SUPFAM" id="SSF52042">
    <property type="entry name" value="Ribosomal protein L32e"/>
    <property type="match status" value="1"/>
</dbReference>
<dbReference type="PROSITE" id="PS00580">
    <property type="entry name" value="RIBOSOMAL_L32E"/>
    <property type="match status" value="1"/>
</dbReference>
<comment type="similarity">
    <text evidence="1">Belongs to the eukaryotic ribosomal protein eL32 family.</text>
</comment>
<keyword id="KW-0687">Ribonucleoprotein</keyword>
<keyword id="KW-0689">Ribosomal protein</keyword>
<proteinExistence type="inferred from homology"/>
<protein>
    <recommendedName>
        <fullName evidence="1">Large ribosomal subunit protein eL32</fullName>
    </recommendedName>
    <alternativeName>
        <fullName>50S ribosomal protein L32e</fullName>
    </alternativeName>
</protein>
<evidence type="ECO:0000305" key="1"/>
<accession>Q9V1V2</accession>
<accession>G8ZHV8</accession>
<gene>
    <name type="primary">rpl32e</name>
    <name type="ordered locus">PYRAB03240</name>
    <name type="ORF">PAB2133</name>
</gene>
<sequence>MDEKEFKRLLRVRARLKRKKPRFLRQEWWRYPKFKNDPKWRRPKGIDSKMRLKLKGKPRSPSIGWSSPRLVRGLHPSGYEEVLIHNVKELEKLDPKRQAARIAHTVGKKKRIEILKRAQELGIKVLNPQL</sequence>
<feature type="chain" id="PRO_0000131159" description="Large ribosomal subunit protein eL32">
    <location>
        <begin position="1"/>
        <end position="130"/>
    </location>
</feature>
<name>RL32_PYRAB</name>
<reference key="1">
    <citation type="journal article" date="2003" name="Mol. Microbiol.">
        <title>An integrated analysis of the genome of the hyperthermophilic archaeon Pyrococcus abyssi.</title>
        <authorList>
            <person name="Cohen G.N."/>
            <person name="Barbe V."/>
            <person name="Flament D."/>
            <person name="Galperin M."/>
            <person name="Heilig R."/>
            <person name="Lecompte O."/>
            <person name="Poch O."/>
            <person name="Prieur D."/>
            <person name="Querellou J."/>
            <person name="Ripp R."/>
            <person name="Thierry J.-C."/>
            <person name="Van der Oost J."/>
            <person name="Weissenbach J."/>
            <person name="Zivanovic Y."/>
            <person name="Forterre P."/>
        </authorList>
    </citation>
    <scope>NUCLEOTIDE SEQUENCE [LARGE SCALE GENOMIC DNA]</scope>
    <source>
        <strain>GE5 / Orsay</strain>
    </source>
</reference>
<reference key="2">
    <citation type="journal article" date="2012" name="Curr. Microbiol.">
        <title>Re-annotation of two hyperthermophilic archaea Pyrococcus abyssi GE5 and Pyrococcus furiosus DSM 3638.</title>
        <authorList>
            <person name="Gao J."/>
            <person name="Wang J."/>
        </authorList>
    </citation>
    <scope>GENOME REANNOTATION</scope>
    <source>
        <strain>GE5 / Orsay</strain>
    </source>
</reference>